<organism>
    <name type="scientific">Paracidovorax citrulli (strain AAC00-1)</name>
    <name type="common">Acidovorax citrulli</name>
    <dbReference type="NCBI Taxonomy" id="397945"/>
    <lineage>
        <taxon>Bacteria</taxon>
        <taxon>Pseudomonadati</taxon>
        <taxon>Pseudomonadota</taxon>
        <taxon>Betaproteobacteria</taxon>
        <taxon>Burkholderiales</taxon>
        <taxon>Comamonadaceae</taxon>
        <taxon>Paracidovorax</taxon>
    </lineage>
</organism>
<comment type="function">
    <text evidence="1">One of the primary rRNA binding proteins, it binds directly near the 3'-end of the 23S rRNA, where it nucleates assembly of the 50S subunit.</text>
</comment>
<comment type="subunit">
    <text evidence="1">Part of the 50S ribosomal subunit. Forms a cluster with proteins L14 and L19.</text>
</comment>
<comment type="PTM">
    <text evidence="1">Methylated by PrmB.</text>
</comment>
<comment type="similarity">
    <text evidence="1">Belongs to the universal ribosomal protein uL3 family.</text>
</comment>
<evidence type="ECO:0000255" key="1">
    <source>
        <dbReference type="HAMAP-Rule" id="MF_01325"/>
    </source>
</evidence>
<evidence type="ECO:0000305" key="2"/>
<sequence length="224" mass="23425">MSLSNSLGLLGRKVGMMRLFTDDGDAVPVTVVDVSNNRVTQVKTQENDGYVALQVTFGSRKASRVTKPEAGHLAKAGVEAGEIIREFRVTAETAGKYATGAAVPVADVFSVGQKVDVQGTSIGKGYAGTIKRHNMASQRASHGNSRSHNVPGSIGMAQDPGRVFPGKRMTGHLGDATTTTQNLDVIRVDEARQLLLIKGAIPGSKGGFVTVRPAVKAKASQGAN</sequence>
<dbReference type="EMBL" id="CP000512">
    <property type="protein sequence ID" value="ABM30945.1"/>
    <property type="molecule type" value="Genomic_DNA"/>
</dbReference>
<dbReference type="RefSeq" id="WP_011793522.1">
    <property type="nucleotide sequence ID" value="NC_008752.1"/>
</dbReference>
<dbReference type="SMR" id="A1TJ07"/>
<dbReference type="STRING" id="397945.Aave_0338"/>
<dbReference type="GeneID" id="79790143"/>
<dbReference type="KEGG" id="aav:Aave_0338"/>
<dbReference type="eggNOG" id="COG0087">
    <property type="taxonomic scope" value="Bacteria"/>
</dbReference>
<dbReference type="HOGENOM" id="CLU_044142_4_1_4"/>
<dbReference type="OrthoDB" id="9806135at2"/>
<dbReference type="Proteomes" id="UP000002596">
    <property type="component" value="Chromosome"/>
</dbReference>
<dbReference type="GO" id="GO:0022625">
    <property type="term" value="C:cytosolic large ribosomal subunit"/>
    <property type="evidence" value="ECO:0007669"/>
    <property type="project" value="TreeGrafter"/>
</dbReference>
<dbReference type="GO" id="GO:0019843">
    <property type="term" value="F:rRNA binding"/>
    <property type="evidence" value="ECO:0007669"/>
    <property type="project" value="UniProtKB-UniRule"/>
</dbReference>
<dbReference type="GO" id="GO:0003735">
    <property type="term" value="F:structural constituent of ribosome"/>
    <property type="evidence" value="ECO:0007669"/>
    <property type="project" value="InterPro"/>
</dbReference>
<dbReference type="GO" id="GO:0006412">
    <property type="term" value="P:translation"/>
    <property type="evidence" value="ECO:0007669"/>
    <property type="project" value="UniProtKB-UniRule"/>
</dbReference>
<dbReference type="FunFam" id="2.40.30.10:FF:000004">
    <property type="entry name" value="50S ribosomal protein L3"/>
    <property type="match status" value="1"/>
</dbReference>
<dbReference type="FunFam" id="3.30.160.810:FF:000001">
    <property type="entry name" value="50S ribosomal protein L3"/>
    <property type="match status" value="1"/>
</dbReference>
<dbReference type="Gene3D" id="3.30.160.810">
    <property type="match status" value="1"/>
</dbReference>
<dbReference type="Gene3D" id="2.40.30.10">
    <property type="entry name" value="Translation factors"/>
    <property type="match status" value="1"/>
</dbReference>
<dbReference type="HAMAP" id="MF_01325_B">
    <property type="entry name" value="Ribosomal_uL3_B"/>
    <property type="match status" value="1"/>
</dbReference>
<dbReference type="InterPro" id="IPR000597">
    <property type="entry name" value="Ribosomal_uL3"/>
</dbReference>
<dbReference type="InterPro" id="IPR019927">
    <property type="entry name" value="Ribosomal_uL3_bac/org-type"/>
</dbReference>
<dbReference type="InterPro" id="IPR019926">
    <property type="entry name" value="Ribosomal_uL3_CS"/>
</dbReference>
<dbReference type="InterPro" id="IPR009000">
    <property type="entry name" value="Transl_B-barrel_sf"/>
</dbReference>
<dbReference type="NCBIfam" id="TIGR03625">
    <property type="entry name" value="L3_bact"/>
    <property type="match status" value="1"/>
</dbReference>
<dbReference type="PANTHER" id="PTHR11229">
    <property type="entry name" value="50S RIBOSOMAL PROTEIN L3"/>
    <property type="match status" value="1"/>
</dbReference>
<dbReference type="PANTHER" id="PTHR11229:SF16">
    <property type="entry name" value="LARGE RIBOSOMAL SUBUNIT PROTEIN UL3C"/>
    <property type="match status" value="1"/>
</dbReference>
<dbReference type="Pfam" id="PF00297">
    <property type="entry name" value="Ribosomal_L3"/>
    <property type="match status" value="1"/>
</dbReference>
<dbReference type="SUPFAM" id="SSF50447">
    <property type="entry name" value="Translation proteins"/>
    <property type="match status" value="1"/>
</dbReference>
<dbReference type="PROSITE" id="PS00474">
    <property type="entry name" value="RIBOSOMAL_L3"/>
    <property type="match status" value="1"/>
</dbReference>
<protein>
    <recommendedName>
        <fullName evidence="1">Large ribosomal subunit protein uL3</fullName>
    </recommendedName>
    <alternativeName>
        <fullName evidence="2">50S ribosomal protein L3</fullName>
    </alternativeName>
</protein>
<feature type="chain" id="PRO_1000051999" description="Large ribosomal subunit protein uL3">
    <location>
        <begin position="1"/>
        <end position="224"/>
    </location>
</feature>
<feature type="modified residue" description="N5-methylglutamine" evidence="1">
    <location>
        <position position="158"/>
    </location>
</feature>
<keyword id="KW-0488">Methylation</keyword>
<keyword id="KW-0687">Ribonucleoprotein</keyword>
<keyword id="KW-0689">Ribosomal protein</keyword>
<keyword id="KW-0694">RNA-binding</keyword>
<keyword id="KW-0699">rRNA-binding</keyword>
<accession>A1TJ07</accession>
<reference key="1">
    <citation type="submission" date="2006-12" db="EMBL/GenBank/DDBJ databases">
        <title>Complete sequence of Acidovorax avenae subsp. citrulli AAC00-1.</title>
        <authorList>
            <person name="Copeland A."/>
            <person name="Lucas S."/>
            <person name="Lapidus A."/>
            <person name="Barry K."/>
            <person name="Detter J.C."/>
            <person name="Glavina del Rio T."/>
            <person name="Dalin E."/>
            <person name="Tice H."/>
            <person name="Pitluck S."/>
            <person name="Kiss H."/>
            <person name="Brettin T."/>
            <person name="Bruce D."/>
            <person name="Han C."/>
            <person name="Tapia R."/>
            <person name="Gilna P."/>
            <person name="Schmutz J."/>
            <person name="Larimer F."/>
            <person name="Land M."/>
            <person name="Hauser L."/>
            <person name="Kyrpides N."/>
            <person name="Kim E."/>
            <person name="Stahl D."/>
            <person name="Richardson P."/>
        </authorList>
    </citation>
    <scope>NUCLEOTIDE SEQUENCE [LARGE SCALE GENOMIC DNA]</scope>
    <source>
        <strain>AAC00-1</strain>
    </source>
</reference>
<name>RL3_PARC0</name>
<proteinExistence type="inferred from homology"/>
<gene>
    <name evidence="1" type="primary">rplC</name>
    <name type="ordered locus">Aave_0338</name>
</gene>